<sequence length="328" mass="35245">MTATKQHKKVILVGDGAVGSSYAFALVNQGIAQELGIIEIPQLFEKAVGDALDLSHALAFTSPKKIYAAKYEDCADADLVVITAGAPQKPGETRLDLVGKNLAINKSIVTQVIESGFNGIFLVAANPVDILTYATWKFSGFPAEKVIGSGTSLDTARFRQALAEKLDVDARSVHAYIMGEHGDSEFAVWSHANVAGVNLENYLQDVQNFNGEELIDLFEGVRDAAYTIINKKGATFYGIAVALARITKAILDDENAILPLSVFQDGQYGFNEVFIGQPAIVGAHGIVRPVNIPLNDAEKQKMQASAKELKAIIDEAFSKEEFAAAARN</sequence>
<reference key="1">
    <citation type="journal article" date="1991" name="Infect. Immun.">
        <title>DNA sequence and in vitro mutagenesis of the gene encoding the fructose-1,6-diphosphate-dependent L-(+)-lactate dehydrogenase of Streptococcus mutans.</title>
        <authorList>
            <person name="Duncan M.J."/>
            <person name="Hillman J.D."/>
        </authorList>
    </citation>
    <scope>NUCLEOTIDE SEQUENCE [GENOMIC DNA]</scope>
    <source>
        <strain>ATCC 55677 / JH 1000 / Serotype c</strain>
    </source>
</reference>
<reference key="2">
    <citation type="submission" date="1995-05" db="EMBL/GenBank/DDBJ databases">
        <authorList>
            <person name="Noble L.M."/>
            <person name="Paterson R."/>
            <person name="Buckingham K."/>
            <person name="Wang D."/>
            <person name="Sandham J."/>
        </authorList>
    </citation>
    <scope>NUCLEOTIDE SEQUENCE [GENOMIC DNA]</scope>
    <source>
        <strain>UT-041 / Serotype c</strain>
    </source>
</reference>
<reference key="3">
    <citation type="journal article" date="2002" name="Proc. Natl. Acad. Sci. U.S.A.">
        <title>Genome sequence of Streptococcus mutans UA159, a cariogenic dental pathogen.</title>
        <authorList>
            <person name="Ajdic D.J."/>
            <person name="McShan W.M."/>
            <person name="McLaughlin R.E."/>
            <person name="Savic G."/>
            <person name="Chang J."/>
            <person name="Carson M.B."/>
            <person name="Primeaux C."/>
            <person name="Tian R."/>
            <person name="Kenton S."/>
            <person name="Jia H.G."/>
            <person name="Lin S.P."/>
            <person name="Qian Y."/>
            <person name="Li S."/>
            <person name="Zhu H."/>
            <person name="Najar F.Z."/>
            <person name="Lai H."/>
            <person name="White J."/>
            <person name="Roe B.A."/>
            <person name="Ferretti J.J."/>
        </authorList>
    </citation>
    <scope>NUCLEOTIDE SEQUENCE [LARGE SCALE GENOMIC DNA]</scope>
    <source>
        <strain>ATCC 700610 / UA159</strain>
    </source>
</reference>
<keyword id="KW-0021">Allosteric enzyme</keyword>
<keyword id="KW-0963">Cytoplasm</keyword>
<keyword id="KW-0520">NAD</keyword>
<keyword id="KW-0560">Oxidoreductase</keyword>
<keyword id="KW-0597">Phosphoprotein</keyword>
<keyword id="KW-1185">Reference proteome</keyword>
<proteinExistence type="inferred from homology"/>
<evidence type="ECO:0000255" key="1">
    <source>
        <dbReference type="HAMAP-Rule" id="MF_00488"/>
    </source>
</evidence>
<evidence type="ECO:0000305" key="2"/>
<gene>
    <name evidence="1" type="primary">ldh</name>
    <name type="synonym">lct</name>
    <name type="ordered locus">SMU_1115</name>
</gene>
<name>LDH_STRMU</name>
<protein>
    <recommendedName>
        <fullName evidence="1">L-lactate dehydrogenase</fullName>
        <shortName evidence="1">L-LDH</shortName>
        <ecNumber evidence="1">1.1.1.27</ecNumber>
    </recommendedName>
</protein>
<accession>P26283</accession>
<comment type="function">
    <text evidence="1">Catalyzes the conversion of lactate to pyruvate.</text>
</comment>
<comment type="catalytic activity">
    <reaction evidence="1">
        <text>(S)-lactate + NAD(+) = pyruvate + NADH + H(+)</text>
        <dbReference type="Rhea" id="RHEA:23444"/>
        <dbReference type="ChEBI" id="CHEBI:15361"/>
        <dbReference type="ChEBI" id="CHEBI:15378"/>
        <dbReference type="ChEBI" id="CHEBI:16651"/>
        <dbReference type="ChEBI" id="CHEBI:57540"/>
        <dbReference type="ChEBI" id="CHEBI:57945"/>
        <dbReference type="EC" id="1.1.1.27"/>
    </reaction>
</comment>
<comment type="activity regulation">
    <text evidence="1">Allosterically activated by fructose 1,6-bisphosphate (FBP).</text>
</comment>
<comment type="pathway">
    <text evidence="1">Fermentation; pyruvate fermentation to lactate; (S)-lactate from pyruvate: step 1/1.</text>
</comment>
<comment type="subunit">
    <text evidence="1">Homotetramer.</text>
</comment>
<comment type="subcellular location">
    <subcellularLocation>
        <location evidence="1">Cytoplasm</location>
    </subcellularLocation>
</comment>
<comment type="similarity">
    <text evidence="1 2">Belongs to the LDH/MDH superfamily. LDH family.</text>
</comment>
<dbReference type="EC" id="1.1.1.27" evidence="1"/>
<dbReference type="EMBL" id="M72545">
    <property type="protein sequence ID" value="AAA26914.1"/>
    <property type="molecule type" value="Genomic_DNA"/>
</dbReference>
<dbReference type="EMBL" id="L42474">
    <property type="protein sequence ID" value="AAA67466.1"/>
    <property type="molecule type" value="Genomic_DNA"/>
</dbReference>
<dbReference type="EMBL" id="AE014133">
    <property type="protein sequence ID" value="AAN58808.1"/>
    <property type="molecule type" value="Genomic_DNA"/>
</dbReference>
<dbReference type="PIR" id="A43598">
    <property type="entry name" value="A43598"/>
</dbReference>
<dbReference type="RefSeq" id="NP_721502.1">
    <property type="nucleotide sequence ID" value="NC_004350.2"/>
</dbReference>
<dbReference type="RefSeq" id="WP_002262228.1">
    <property type="nucleotide sequence ID" value="NC_004350.2"/>
</dbReference>
<dbReference type="SMR" id="P26283"/>
<dbReference type="STRING" id="210007.SMU_1115"/>
<dbReference type="KEGG" id="smu:SMU_1115"/>
<dbReference type="PATRIC" id="fig|210007.7.peg.998"/>
<dbReference type="eggNOG" id="COG0039">
    <property type="taxonomic scope" value="Bacteria"/>
</dbReference>
<dbReference type="HOGENOM" id="CLU_045401_1_1_9"/>
<dbReference type="OrthoDB" id="9802969at2"/>
<dbReference type="PhylomeDB" id="P26283"/>
<dbReference type="BioCyc" id="MetaCyc:MONOMER-13096"/>
<dbReference type="BRENDA" id="1.1.1.27">
    <property type="organism ID" value="14748"/>
</dbReference>
<dbReference type="SABIO-RK" id="P26283"/>
<dbReference type="UniPathway" id="UPA00554">
    <property type="reaction ID" value="UER00611"/>
</dbReference>
<dbReference type="Proteomes" id="UP000002512">
    <property type="component" value="Chromosome"/>
</dbReference>
<dbReference type="GO" id="GO:0005737">
    <property type="term" value="C:cytoplasm"/>
    <property type="evidence" value="ECO:0007669"/>
    <property type="project" value="UniProtKB-SubCell"/>
</dbReference>
<dbReference type="GO" id="GO:0004459">
    <property type="term" value="F:L-lactate dehydrogenase activity"/>
    <property type="evidence" value="ECO:0007669"/>
    <property type="project" value="UniProtKB-UniRule"/>
</dbReference>
<dbReference type="GO" id="GO:0006096">
    <property type="term" value="P:glycolytic process"/>
    <property type="evidence" value="ECO:0007669"/>
    <property type="project" value="UniProtKB-UniRule"/>
</dbReference>
<dbReference type="GO" id="GO:0006089">
    <property type="term" value="P:lactate metabolic process"/>
    <property type="evidence" value="ECO:0007669"/>
    <property type="project" value="TreeGrafter"/>
</dbReference>
<dbReference type="CDD" id="cd05291">
    <property type="entry name" value="HicDH_like"/>
    <property type="match status" value="1"/>
</dbReference>
<dbReference type="FunFam" id="3.40.50.720:FF:000018">
    <property type="entry name" value="Malate dehydrogenase"/>
    <property type="match status" value="1"/>
</dbReference>
<dbReference type="Gene3D" id="3.90.110.10">
    <property type="entry name" value="Lactate dehydrogenase/glycoside hydrolase, family 4, C-terminal"/>
    <property type="match status" value="1"/>
</dbReference>
<dbReference type="Gene3D" id="3.40.50.720">
    <property type="entry name" value="NAD(P)-binding Rossmann-like Domain"/>
    <property type="match status" value="1"/>
</dbReference>
<dbReference type="HAMAP" id="MF_00488">
    <property type="entry name" value="Lactate_dehydrog"/>
    <property type="match status" value="1"/>
</dbReference>
<dbReference type="InterPro" id="IPR001557">
    <property type="entry name" value="L-lactate/malate_DH"/>
</dbReference>
<dbReference type="InterPro" id="IPR011304">
    <property type="entry name" value="L-lactate_DH"/>
</dbReference>
<dbReference type="InterPro" id="IPR018177">
    <property type="entry name" value="L-lactate_DH_AS"/>
</dbReference>
<dbReference type="InterPro" id="IPR022383">
    <property type="entry name" value="Lactate/malate_DH_C"/>
</dbReference>
<dbReference type="InterPro" id="IPR001236">
    <property type="entry name" value="Lactate/malate_DH_N"/>
</dbReference>
<dbReference type="InterPro" id="IPR015955">
    <property type="entry name" value="Lactate_DH/Glyco_Ohase_4_C"/>
</dbReference>
<dbReference type="InterPro" id="IPR036291">
    <property type="entry name" value="NAD(P)-bd_dom_sf"/>
</dbReference>
<dbReference type="NCBIfam" id="TIGR01771">
    <property type="entry name" value="L-LDH-NAD"/>
    <property type="match status" value="1"/>
</dbReference>
<dbReference type="NCBIfam" id="NF000824">
    <property type="entry name" value="PRK00066.1"/>
    <property type="match status" value="1"/>
</dbReference>
<dbReference type="PANTHER" id="PTHR43128">
    <property type="entry name" value="L-2-HYDROXYCARBOXYLATE DEHYDROGENASE (NAD(P)(+))"/>
    <property type="match status" value="1"/>
</dbReference>
<dbReference type="PANTHER" id="PTHR43128:SF16">
    <property type="entry name" value="L-LACTATE DEHYDROGENASE"/>
    <property type="match status" value="1"/>
</dbReference>
<dbReference type="Pfam" id="PF02866">
    <property type="entry name" value="Ldh_1_C"/>
    <property type="match status" value="1"/>
</dbReference>
<dbReference type="Pfam" id="PF00056">
    <property type="entry name" value="Ldh_1_N"/>
    <property type="match status" value="1"/>
</dbReference>
<dbReference type="PIRSF" id="PIRSF000102">
    <property type="entry name" value="Lac_mal_DH"/>
    <property type="match status" value="1"/>
</dbReference>
<dbReference type="PRINTS" id="PR00086">
    <property type="entry name" value="LLDHDRGNASE"/>
</dbReference>
<dbReference type="SUPFAM" id="SSF56327">
    <property type="entry name" value="LDH C-terminal domain-like"/>
    <property type="match status" value="1"/>
</dbReference>
<dbReference type="SUPFAM" id="SSF51735">
    <property type="entry name" value="NAD(P)-binding Rossmann-fold domains"/>
    <property type="match status" value="1"/>
</dbReference>
<dbReference type="PROSITE" id="PS00064">
    <property type="entry name" value="L_LDH"/>
    <property type="match status" value="1"/>
</dbReference>
<organism>
    <name type="scientific">Streptococcus mutans serotype c (strain ATCC 700610 / UA159)</name>
    <dbReference type="NCBI Taxonomy" id="210007"/>
    <lineage>
        <taxon>Bacteria</taxon>
        <taxon>Bacillati</taxon>
        <taxon>Bacillota</taxon>
        <taxon>Bacilli</taxon>
        <taxon>Lactobacillales</taxon>
        <taxon>Streptococcaceae</taxon>
        <taxon>Streptococcus</taxon>
    </lineage>
</organism>
<feature type="chain" id="PRO_0000168396" description="L-lactate dehydrogenase">
    <location>
        <begin position="1"/>
        <end position="328"/>
    </location>
</feature>
<feature type="active site" description="Proton acceptor" evidence="1">
    <location>
        <position position="181"/>
    </location>
</feature>
<feature type="binding site" evidence="1">
    <location>
        <position position="18"/>
    </location>
    <ligand>
        <name>NAD(+)</name>
        <dbReference type="ChEBI" id="CHEBI:57540"/>
    </ligand>
</feature>
<feature type="binding site" evidence="1">
    <location>
        <position position="39"/>
    </location>
    <ligand>
        <name>NAD(+)</name>
        <dbReference type="ChEBI" id="CHEBI:57540"/>
    </ligand>
</feature>
<feature type="binding site" evidence="1">
    <location>
        <position position="46"/>
    </location>
    <ligand>
        <name>NAD(+)</name>
        <dbReference type="ChEBI" id="CHEBI:57540"/>
    </ligand>
</feature>
<feature type="binding site" evidence="1">
    <location>
        <position position="71"/>
    </location>
    <ligand>
        <name>NAD(+)</name>
        <dbReference type="ChEBI" id="CHEBI:57540"/>
    </ligand>
</feature>
<feature type="binding site" evidence="1">
    <location>
        <begin position="85"/>
        <end position="86"/>
    </location>
    <ligand>
        <name>NAD(+)</name>
        <dbReference type="ChEBI" id="CHEBI:57540"/>
    </ligand>
</feature>
<feature type="binding site" evidence="1">
    <location>
        <position position="88"/>
    </location>
    <ligand>
        <name>substrate</name>
    </ligand>
</feature>
<feature type="binding site" evidence="1">
    <location>
        <position position="94"/>
    </location>
    <ligand>
        <name>substrate</name>
    </ligand>
</feature>
<feature type="binding site" evidence="1">
    <location>
        <position position="107"/>
    </location>
    <ligand>
        <name>NAD(+)</name>
        <dbReference type="ChEBI" id="CHEBI:57540"/>
    </ligand>
</feature>
<feature type="binding site" evidence="1">
    <location>
        <begin position="124"/>
        <end position="126"/>
    </location>
    <ligand>
        <name>NAD(+)</name>
        <dbReference type="ChEBI" id="CHEBI:57540"/>
    </ligand>
</feature>
<feature type="binding site" evidence="1">
    <location>
        <begin position="126"/>
        <end position="129"/>
    </location>
    <ligand>
        <name>substrate</name>
    </ligand>
</feature>
<feature type="binding site" evidence="1">
    <location>
        <position position="149"/>
    </location>
    <ligand>
        <name>NAD(+)</name>
        <dbReference type="ChEBI" id="CHEBI:57540"/>
    </ligand>
</feature>
<feature type="binding site" evidence="1">
    <location>
        <begin position="154"/>
        <end position="157"/>
    </location>
    <ligand>
        <name>substrate</name>
    </ligand>
</feature>
<feature type="binding site" evidence="1">
    <location>
        <position position="159"/>
    </location>
    <ligand>
        <name>beta-D-fructose 1,6-bisphosphate</name>
        <dbReference type="ChEBI" id="CHEBI:32966"/>
        <note>allosteric activator</note>
    </ligand>
</feature>
<feature type="binding site" evidence="1">
    <location>
        <position position="174"/>
    </location>
    <ligand>
        <name>beta-D-fructose 1,6-bisphosphate</name>
        <dbReference type="ChEBI" id="CHEBI:32966"/>
        <note>allosteric activator</note>
    </ligand>
</feature>
<feature type="binding site" evidence="1">
    <location>
        <position position="235"/>
    </location>
    <ligand>
        <name>substrate</name>
    </ligand>
</feature>
<feature type="modified residue" description="Phosphotyrosine" evidence="1">
    <location>
        <position position="226"/>
    </location>
</feature>
<feature type="sequence conflict" description="In Ref. 1 and 2." evidence="2" ref="1 2">
    <original>A</original>
    <variation>R</variation>
    <location>
        <position position="23"/>
    </location>
</feature>